<sequence length="447" mass="48283">MSASKIPLFKMKDLILILCLLEMSFAVPFFPQQSGTPGMASLSLETMRQLGSLQRLNTLSQYSRYGFGKSFNSLWMHGLLPPHSSLPWMRPREHETQQYEYSLPVHPPPLPSQPSLKPQQPGLKPFLQSAAATTNQATALKEALQPPIHLGHLPLQEGELPLVQQQVAPSDKPPKPELPGVDFADPQGPSLPGMDFPDPQGPSLPGLDFADPQGSTIFQIARLISHGPMPQNKQSPLYPGMLYVPFGANQLNAPARLGIMSSEEVAGGREDPMAYGAMFPGFGGMRPGFEGMPHNPAMGGDFTLEFDSPVAATKGPENEEGGAQGSPMPEANPDNLENPAFLTELEPAPHAGLLALPKDDIPGLPRSPSGKMKGLPSVTPAAADPLMTPELADVYRTYDADMTTSVDFQEEATMDTTMAPNSLQTSMPGNKAQEPEMMHDAWHFQEP</sequence>
<reference key="1">
    <citation type="submission" date="2000-05" db="EMBL/GenBank/DDBJ databases">
        <title>Isolation and characterization of human ameloblastin cDNA.</title>
        <authorList>
            <person name="Yang J."/>
            <person name="Zeichner-David M."/>
        </authorList>
    </citation>
    <scope>NUCLEOTIDE SEQUENCE [MRNA] (ISOFORM 1)</scope>
    <source>
        <tissue>Molar</tissue>
    </source>
</reference>
<reference key="2">
    <citation type="journal article" date="2000" name="Gene">
        <title>Cloning and characterization of the human ameloblastin gene.</title>
        <authorList>
            <person name="Toyosawa S."/>
            <person name="Fujiwara T."/>
            <person name="Ooshima T."/>
            <person name="Shintani S."/>
            <person name="Sato A."/>
            <person name="Ogawa Y."/>
            <person name="Sobue S."/>
            <person name="Ijuhin N."/>
        </authorList>
    </citation>
    <scope>NUCLEOTIDE SEQUENCE [MRNA] (ISOFORM 1)</scope>
    <scope>VARIANTS AMELOBLATOMA THR-11; 396-ARG-THR-397 DELINS GLY-ALA AND ARG-439</scope>
</reference>
<reference key="3">
    <citation type="journal article" date="2000" name="Eur. J. Oral Sci.">
        <title>Cloning, characterization and immunolocalization of human ameloblastin.</title>
        <authorList>
            <person name="MacDougall M."/>
            <person name="Simmons D."/>
            <person name="Gu T.T."/>
            <person name="Forsman-Semb K."/>
            <person name="Mardh C.K."/>
            <person name="Mesbah M."/>
            <person name="Forest N."/>
            <person name="Krebsbach P.H."/>
            <person name="Yamada Y."/>
            <person name="Berdal A."/>
        </authorList>
    </citation>
    <scope>NUCLEOTIDE SEQUENCE [MRNA] (ISOFORMS 1 AND 2)</scope>
    <source>
        <tissue>Molar</tissue>
    </source>
</reference>
<reference key="4">
    <citation type="journal article" date="2001" name="Eur. J. Oral Sci.">
        <title>Human ameloblastin gene: genomic organization and mutation analysis in amelogenesis imperfecta patients.</title>
        <authorList>
            <person name="Mardh C.K."/>
            <person name="Backman B."/>
            <person name="Simmons D."/>
            <person name="Golovleva I."/>
            <person name="Gu T.T."/>
            <person name="Holmgren G."/>
            <person name="MacDougall M."/>
            <person name="Forsman-Semb K."/>
        </authorList>
    </citation>
    <scope>NUCLEOTIDE SEQUENCE [GENOMIC DNA]</scope>
    <scope>VARIANT PRO-354</scope>
</reference>
<reference key="5">
    <citation type="journal article" date="2004" name="Genome Res.">
        <title>The status, quality, and expansion of the NIH full-length cDNA project: the Mammalian Gene Collection (MGC).</title>
        <authorList>
            <consortium name="The MGC Project Team"/>
        </authorList>
    </citation>
    <scope>NUCLEOTIDE SEQUENCE [LARGE SCALE MRNA] (ISOFORM 1)</scope>
    <scope>VARIANT PRO-354</scope>
</reference>
<reference key="6">
    <citation type="journal article" date="2014" name="Hum. Mol. Genet.">
        <title>Deletion of ameloblastin exon 6 is associated with amelogenesis imperfecta.</title>
        <authorList>
            <person name="Poulter J.A."/>
            <person name="Murillo G."/>
            <person name="Brookes S.J."/>
            <person name="Smith C.E."/>
            <person name="Parry D.A."/>
            <person name="Silva S."/>
            <person name="Kirkham J."/>
            <person name="Inglehearn C.F."/>
            <person name="Mighell A.J."/>
        </authorList>
    </citation>
    <scope>INVOLVEMENT IN AI1F</scope>
</reference>
<evidence type="ECO:0000250" key="1"/>
<evidence type="ECO:0000250" key="2">
    <source>
        <dbReference type="UniProtKB" id="Q28989"/>
    </source>
</evidence>
<evidence type="ECO:0000255" key="3"/>
<evidence type="ECO:0000256" key="4">
    <source>
        <dbReference type="SAM" id="MobiDB-lite"/>
    </source>
</evidence>
<evidence type="ECO:0000269" key="5">
    <source>
    </source>
</evidence>
<evidence type="ECO:0000269" key="6">
    <source>
    </source>
</evidence>
<evidence type="ECO:0000269" key="7">
    <source>
    </source>
</evidence>
<evidence type="ECO:0000269" key="8">
    <source>
    </source>
</evidence>
<evidence type="ECO:0000303" key="9">
    <source>
    </source>
</evidence>
<evidence type="ECO:0000305" key="10"/>
<name>AMBN_HUMAN</name>
<organism>
    <name type="scientific">Homo sapiens</name>
    <name type="common">Human</name>
    <dbReference type="NCBI Taxonomy" id="9606"/>
    <lineage>
        <taxon>Eukaryota</taxon>
        <taxon>Metazoa</taxon>
        <taxon>Chordata</taxon>
        <taxon>Craniata</taxon>
        <taxon>Vertebrata</taxon>
        <taxon>Euteleostomi</taxon>
        <taxon>Mammalia</taxon>
        <taxon>Eutheria</taxon>
        <taxon>Euarchontoglires</taxon>
        <taxon>Primates</taxon>
        <taxon>Haplorrhini</taxon>
        <taxon>Catarrhini</taxon>
        <taxon>Hominidae</taxon>
        <taxon>Homo</taxon>
    </lineage>
</organism>
<comment type="function">
    <text>Involved in the mineralization and structural organization of enamel.</text>
</comment>
<comment type="interaction">
    <interactant intactId="EBI-11893530">
        <id>Q9NP70</id>
    </interactant>
    <interactant intactId="EBI-10988864">
        <id>P46379-2</id>
        <label>BAG6</label>
    </interactant>
    <organismsDiffer>false</organismsDiffer>
    <experiments>3</experiments>
</comment>
<comment type="interaction">
    <interactant intactId="EBI-11893530">
        <id>Q9NP70</id>
    </interactant>
    <interactant intactId="EBI-21553822">
        <id>Q96A83-2</id>
        <label>COL26A1</label>
    </interactant>
    <organismsDiffer>false</organismsDiffer>
    <experiments>3</experiments>
</comment>
<comment type="interaction">
    <interactant intactId="EBI-11893530">
        <id>Q9NP70</id>
    </interactant>
    <interactant intactId="EBI-12593112">
        <id>O75190-2</id>
        <label>DNAJB6</label>
    </interactant>
    <organismsDiffer>false</organismsDiffer>
    <experiments>3</experiments>
</comment>
<comment type="interaction">
    <interactant intactId="EBI-11893530">
        <id>Q9NP70</id>
    </interactant>
    <interactant intactId="EBI-742600">
        <id>Q9Y624</id>
        <label>F11R</label>
    </interactant>
    <organismsDiffer>false</organismsDiffer>
    <experiments>3</experiments>
</comment>
<comment type="interaction">
    <interactant intactId="EBI-11893530">
        <id>Q9NP70</id>
    </interactant>
    <interactant intactId="EBI-7147442">
        <id>Q8IXL6</id>
        <label>FAM20C</label>
    </interactant>
    <organismsDiffer>false</organismsDiffer>
    <experiments>2</experiments>
</comment>
<comment type="interaction">
    <interactant intactId="EBI-11893530">
        <id>Q9NP70</id>
    </interactant>
    <interactant intactId="EBI-6398041">
        <id>Q9UMF0</id>
        <label>ICAM5</label>
    </interactant>
    <organismsDiffer>false</organismsDiffer>
    <experiments>3</experiments>
</comment>
<comment type="interaction">
    <interactant intactId="EBI-11893530">
        <id>Q9NP70</id>
    </interactant>
    <interactant intactId="EBI-948266">
        <id>O14901</id>
        <label>KLF11</label>
    </interactant>
    <organismsDiffer>false</organismsDiffer>
    <experiments>3</experiments>
</comment>
<comment type="interaction">
    <interactant intactId="EBI-11893530">
        <id>Q9NP70</id>
    </interactant>
    <interactant intactId="EBI-2811583">
        <id>Q9BVL2</id>
        <label>NUP58</label>
    </interactant>
    <organismsDiffer>false</organismsDiffer>
    <experiments>3</experiments>
</comment>
<comment type="interaction">
    <interactant intactId="EBI-11893530">
        <id>Q9NP70</id>
    </interactant>
    <interactant intactId="EBI-947187">
        <id>Q9UHD9</id>
        <label>UBQLN2</label>
    </interactant>
    <organismsDiffer>false</organismsDiffer>
    <experiments>3</experiments>
</comment>
<comment type="subcellular location">
    <subcellularLocation>
        <location>Secreted</location>
        <location>Extracellular space</location>
        <location>Extracellular matrix</location>
    </subcellularLocation>
</comment>
<comment type="alternative products">
    <event type="alternative splicing"/>
    <isoform>
        <id>Q9NP70-1</id>
        <name>1</name>
        <sequence type="displayed"/>
    </isoform>
    <isoform>
        <id>Q9NP70-2</id>
        <name>2</name>
        <sequence type="described" ref="VSP_000224"/>
    </isoform>
</comment>
<comment type="tissue specificity">
    <text>Ameloblast-specific. Located at the Tomes processes of secretory ameloblasts and in the sheath space between rod-interrod enamel.</text>
</comment>
<comment type="disease" evidence="8">
    <disease id="DI-04358">
        <name>Amelogenesis imperfecta 1F</name>
        <acronym>AI1F</acronym>
        <description>A form of amelogenesis imperfecta, a disorder characterized by defective enamel formation. The enamel may be hypoplastic, hypomineralized or both, and affected teeth may be discoloured, sensitive or prone to disintegration. AI1F is characterized by hypoplastic enamel of the primary and secondary dentition.</description>
        <dbReference type="MIM" id="616270"/>
    </disease>
    <text>The disease is caused by variants affecting the gene represented in this entry.</text>
</comment>
<comment type="similarity">
    <text evidence="10">Belongs to the ameloblastin family.</text>
</comment>
<comment type="online information" name="Atlas of Genetics and Cytogenetics in Oncology and Haematology">
    <link uri="https://atlasgeneticsoncology.org/gene/51161/AMBN"/>
</comment>
<accession>Q9NP70</accession>
<accession>Q3B862</accession>
<accession>Q9H2X1</accession>
<accession>Q9H4L1</accession>
<feature type="signal peptide" evidence="3">
    <location>
        <begin position="1"/>
        <end position="26"/>
    </location>
</feature>
<feature type="chain" id="PRO_0000001192" description="Ameloblastin">
    <location>
        <begin position="27"/>
        <end position="447"/>
    </location>
</feature>
<feature type="repeat" description="1">
    <location>
        <begin position="189"/>
        <end position="201"/>
    </location>
</feature>
<feature type="repeat" description="2">
    <location>
        <begin position="202"/>
        <end position="214"/>
    </location>
</feature>
<feature type="region of interest" description="Disordered" evidence="4">
    <location>
        <begin position="165"/>
        <end position="211"/>
    </location>
</feature>
<feature type="region of interest" description="Disordered" evidence="4">
    <location>
        <begin position="307"/>
        <end position="338"/>
    </location>
</feature>
<feature type="region of interest" description="Disordered" evidence="4">
    <location>
        <begin position="353"/>
        <end position="383"/>
    </location>
</feature>
<feature type="modified residue" description="Hydroxyproline" evidence="1">
    <location>
        <position position="37"/>
    </location>
</feature>
<feature type="modified residue" description="Phosphoserine" evidence="2">
    <location>
        <position position="43"/>
    </location>
</feature>
<feature type="glycosylation site" description="O-linked (GalNAc...) serine" evidence="1">
    <location>
        <position position="112"/>
    </location>
</feature>
<feature type="splice variant" id="VSP_000224" description="In isoform 2." evidence="9">
    <location>
        <begin position="99"/>
        <end position="113"/>
    </location>
</feature>
<feature type="sequence variant" id="VAR_014066" description="In ameloblastoma." evidence="5">
    <original>M</original>
    <variation>T</variation>
    <location>
        <position position="11"/>
    </location>
</feature>
<feature type="sequence variant" id="VAR_048225" description="In dbSNP:rs7439186.">
    <original>A</original>
    <variation>V</variation>
    <location>
        <position position="255"/>
    </location>
</feature>
<feature type="sequence variant" id="VAR_014067" description="In dbSNP:rs72654387." evidence="6 7">
    <original>L</original>
    <variation>P</variation>
    <location>
        <position position="354"/>
    </location>
</feature>
<feature type="sequence variant" id="VAR_014068" description="In an ameloblastoma sample." evidence="5">
    <original>RT</original>
    <variation>GA</variation>
    <location>
        <begin position="396"/>
        <end position="397"/>
    </location>
</feature>
<feature type="sequence variant" id="VAR_014069" description="In an ameloblastoma sample; dbSNP:rs375426598." evidence="5">
    <original>H</original>
    <variation>R</variation>
    <location>
        <position position="439"/>
    </location>
</feature>
<feature type="sequence conflict" description="In Ref. 3; AAG35772 and 4; AAG27036." evidence="10" ref="3 4">
    <original>E</original>
    <variation>K</variation>
    <location>
        <position position="159"/>
    </location>
</feature>
<feature type="sequence conflict" description="In Ref. 3; AAG35772 and 4; AAG27036." evidence="10" ref="3 4">
    <original>Q</original>
    <variation>R</variation>
    <location>
        <position position="166"/>
    </location>
</feature>
<feature type="sequence conflict" description="In Ref. 3; AAG35772 and 4; AAG27036." evidence="10" ref="3 4">
    <original>G</original>
    <variation>R</variation>
    <location>
        <position position="180"/>
    </location>
</feature>
<feature type="sequence conflict" description="In Ref. 3; AAG35772." evidence="10" ref="3">
    <original>ALP</original>
    <variation>VFL</variation>
    <location>
        <begin position="355"/>
        <end position="357"/>
    </location>
</feature>
<feature type="sequence conflict" description="In Ref. 3; AAG35772." evidence="10" ref="3">
    <original>S</original>
    <variation>D</variation>
    <location>
        <position position="367"/>
    </location>
</feature>
<feature type="sequence conflict" description="In Ref. 3; AAG35772." evidence="10" ref="3">
    <original>A</original>
    <variation>V</variation>
    <location>
        <position position="383"/>
    </location>
</feature>
<keyword id="KW-0025">Alternative splicing</keyword>
<keyword id="KW-0986">Amelogenesis imperfecta</keyword>
<keyword id="KW-0091">Biomineralization</keyword>
<keyword id="KW-0272">Extracellular matrix</keyword>
<keyword id="KW-0325">Glycoprotein</keyword>
<keyword id="KW-0379">Hydroxylation</keyword>
<keyword id="KW-0597">Phosphoprotein</keyword>
<keyword id="KW-1267">Proteomics identification</keyword>
<keyword id="KW-1185">Reference proteome</keyword>
<keyword id="KW-0677">Repeat</keyword>
<keyword id="KW-0964">Secreted</keyword>
<keyword id="KW-0732">Signal</keyword>
<protein>
    <recommendedName>
        <fullName>Ameloblastin</fullName>
    </recommendedName>
</protein>
<dbReference type="EMBL" id="AF263464">
    <property type="protein sequence ID" value="AAF73048.1"/>
    <property type="molecule type" value="mRNA"/>
</dbReference>
<dbReference type="EMBL" id="AF219994">
    <property type="protein sequence ID" value="AAF37355.1"/>
    <property type="molecule type" value="mRNA"/>
</dbReference>
<dbReference type="EMBL" id="AF209780">
    <property type="protein sequence ID" value="AAG35772.1"/>
    <property type="molecule type" value="mRNA"/>
</dbReference>
<dbReference type="EMBL" id="AY009124">
    <property type="protein sequence ID" value="AAG27036.1"/>
    <property type="molecule type" value="Genomic_DNA"/>
</dbReference>
<dbReference type="EMBL" id="AY009116">
    <property type="protein sequence ID" value="AAG27036.1"/>
    <property type="status" value="JOINED"/>
    <property type="molecule type" value="Genomic_DNA"/>
</dbReference>
<dbReference type="EMBL" id="AY009117">
    <property type="protein sequence ID" value="AAG27036.1"/>
    <property type="status" value="JOINED"/>
    <property type="molecule type" value="Genomic_DNA"/>
</dbReference>
<dbReference type="EMBL" id="AY009118">
    <property type="protein sequence ID" value="AAG27036.1"/>
    <property type="status" value="JOINED"/>
    <property type="molecule type" value="Genomic_DNA"/>
</dbReference>
<dbReference type="EMBL" id="AY009119">
    <property type="protein sequence ID" value="AAG27036.1"/>
    <property type="status" value="JOINED"/>
    <property type="molecule type" value="Genomic_DNA"/>
</dbReference>
<dbReference type="EMBL" id="AY009120">
    <property type="protein sequence ID" value="AAG27036.1"/>
    <property type="status" value="JOINED"/>
    <property type="molecule type" value="Genomic_DNA"/>
</dbReference>
<dbReference type="EMBL" id="AY009121">
    <property type="protein sequence ID" value="AAG27036.1"/>
    <property type="status" value="JOINED"/>
    <property type="molecule type" value="Genomic_DNA"/>
</dbReference>
<dbReference type="EMBL" id="AY009122">
    <property type="protein sequence ID" value="AAG27036.1"/>
    <property type="status" value="JOINED"/>
    <property type="molecule type" value="Genomic_DNA"/>
</dbReference>
<dbReference type="EMBL" id="AY009123">
    <property type="protein sequence ID" value="AAG27036.1"/>
    <property type="status" value="JOINED"/>
    <property type="molecule type" value="Genomic_DNA"/>
</dbReference>
<dbReference type="EMBL" id="BC106931">
    <property type="protein sequence ID" value="AAI06932.1"/>
    <property type="molecule type" value="mRNA"/>
</dbReference>
<dbReference type="CCDS" id="CCDS3543.1">
    <molecule id="Q9NP70-1"/>
</dbReference>
<dbReference type="RefSeq" id="NP_057603.1">
    <molecule id="Q9NP70-1"/>
    <property type="nucleotide sequence ID" value="NM_016519.6"/>
</dbReference>
<dbReference type="BioGRID" id="106756">
    <property type="interactions" value="7"/>
</dbReference>
<dbReference type="FunCoup" id="Q9NP70">
    <property type="interactions" value="19"/>
</dbReference>
<dbReference type="IntAct" id="Q9NP70">
    <property type="interactions" value="12"/>
</dbReference>
<dbReference type="STRING" id="9606.ENSP00000313809"/>
<dbReference type="GlyCosmos" id="Q9NP70">
    <property type="glycosylation" value="1 site, No reported glycans"/>
</dbReference>
<dbReference type="GlyGen" id="Q9NP70">
    <property type="glycosylation" value="1 site"/>
</dbReference>
<dbReference type="iPTMnet" id="Q9NP70"/>
<dbReference type="PhosphoSitePlus" id="Q9NP70"/>
<dbReference type="BioMuta" id="AMBN"/>
<dbReference type="DMDM" id="23813668"/>
<dbReference type="MassIVE" id="Q9NP70"/>
<dbReference type="PaxDb" id="9606-ENSP00000313809"/>
<dbReference type="PeptideAtlas" id="Q9NP70"/>
<dbReference type="Antibodypedia" id="24340">
    <property type="antibodies" value="124 antibodies from 22 providers"/>
</dbReference>
<dbReference type="DNASU" id="258"/>
<dbReference type="Ensembl" id="ENST00000322937.10">
    <molecule id="Q9NP70-1"/>
    <property type="protein sequence ID" value="ENSP00000313809.6"/>
    <property type="gene ID" value="ENSG00000178522.15"/>
</dbReference>
<dbReference type="Ensembl" id="ENST00000449493.2">
    <molecule id="Q9NP70-2"/>
    <property type="protein sequence ID" value="ENSP00000391234.2"/>
    <property type="gene ID" value="ENSG00000178522.15"/>
</dbReference>
<dbReference type="GeneID" id="258"/>
<dbReference type="KEGG" id="hsa:258"/>
<dbReference type="MANE-Select" id="ENST00000322937.10">
    <property type="protein sequence ID" value="ENSP00000313809.6"/>
    <property type="RefSeq nucleotide sequence ID" value="NM_016519.6"/>
    <property type="RefSeq protein sequence ID" value="NP_057603.1"/>
</dbReference>
<dbReference type="UCSC" id="uc003hfl.4">
    <molecule id="Q9NP70-1"/>
    <property type="organism name" value="human"/>
</dbReference>
<dbReference type="AGR" id="HGNC:452"/>
<dbReference type="CTD" id="258"/>
<dbReference type="DisGeNET" id="258"/>
<dbReference type="GeneCards" id="AMBN"/>
<dbReference type="HGNC" id="HGNC:452">
    <property type="gene designation" value="AMBN"/>
</dbReference>
<dbReference type="HPA" id="ENSG00000178522">
    <property type="expression patterns" value="Tissue enhanced (brain)"/>
</dbReference>
<dbReference type="MalaCards" id="AMBN"/>
<dbReference type="MIM" id="601259">
    <property type="type" value="gene"/>
</dbReference>
<dbReference type="MIM" id="616270">
    <property type="type" value="phenotype"/>
</dbReference>
<dbReference type="neXtProt" id="NX_Q9NP70"/>
<dbReference type="OpenTargets" id="ENSG00000178522"/>
<dbReference type="Orphanet" id="100031">
    <property type="disease" value="Hypoplastic amelogenesis imperfecta"/>
</dbReference>
<dbReference type="PharmGKB" id="PA24758"/>
<dbReference type="VEuPathDB" id="HostDB:ENSG00000178522"/>
<dbReference type="eggNOG" id="ENOG502QWCP">
    <property type="taxonomic scope" value="Eukaryota"/>
</dbReference>
<dbReference type="GeneTree" id="ENSGT00390000018227"/>
<dbReference type="InParanoid" id="Q9NP70"/>
<dbReference type="OMA" id="MPHKPAM"/>
<dbReference type="OrthoDB" id="9908655at2759"/>
<dbReference type="PAN-GO" id="Q9NP70">
    <property type="GO annotations" value="2 GO annotations based on evolutionary models"/>
</dbReference>
<dbReference type="PhylomeDB" id="Q9NP70"/>
<dbReference type="TreeFam" id="TF337860"/>
<dbReference type="PathwayCommons" id="Q9NP70"/>
<dbReference type="Reactome" id="R-HSA-381426">
    <property type="pathway name" value="Regulation of Insulin-like Growth Factor (IGF) transport and uptake by Insulin-like Growth Factor Binding Proteins (IGFBPs)"/>
</dbReference>
<dbReference type="Reactome" id="R-HSA-8957275">
    <property type="pathway name" value="Post-translational protein phosphorylation"/>
</dbReference>
<dbReference type="SignaLink" id="Q9NP70"/>
<dbReference type="BioGRID-ORCS" id="258">
    <property type="hits" value="12 hits in 1139 CRISPR screens"/>
</dbReference>
<dbReference type="GenomeRNAi" id="258"/>
<dbReference type="Pharos" id="Q9NP70">
    <property type="development level" value="Tbio"/>
</dbReference>
<dbReference type="PRO" id="PR:Q9NP70"/>
<dbReference type="Proteomes" id="UP000005640">
    <property type="component" value="Chromosome 4"/>
</dbReference>
<dbReference type="RNAct" id="Q9NP70">
    <property type="molecule type" value="protein"/>
</dbReference>
<dbReference type="Bgee" id="ENSG00000178522">
    <property type="expression patterns" value="Expressed in male germ line stem cell (sensu Vertebrata) in testis and 26 other cell types or tissues"/>
</dbReference>
<dbReference type="ExpressionAtlas" id="Q9NP70">
    <property type="expression patterns" value="baseline and differential"/>
</dbReference>
<dbReference type="GO" id="GO:0005788">
    <property type="term" value="C:endoplasmic reticulum lumen"/>
    <property type="evidence" value="ECO:0000304"/>
    <property type="project" value="Reactome"/>
</dbReference>
<dbReference type="GO" id="GO:0005576">
    <property type="term" value="C:extracellular region"/>
    <property type="evidence" value="ECO:0007669"/>
    <property type="project" value="UniProtKB-KW"/>
</dbReference>
<dbReference type="GO" id="GO:0008083">
    <property type="term" value="F:growth factor activity"/>
    <property type="evidence" value="ECO:0000250"/>
    <property type="project" value="BHF-UCL"/>
</dbReference>
<dbReference type="GO" id="GO:0030345">
    <property type="term" value="F:structural constituent of tooth enamel"/>
    <property type="evidence" value="ECO:0007669"/>
    <property type="project" value="InterPro"/>
</dbReference>
<dbReference type="GO" id="GO:0031214">
    <property type="term" value="P:biomineral tissue development"/>
    <property type="evidence" value="ECO:0007669"/>
    <property type="project" value="UniProtKB-KW"/>
</dbReference>
<dbReference type="GO" id="GO:0007155">
    <property type="term" value="P:cell adhesion"/>
    <property type="evidence" value="ECO:0000250"/>
    <property type="project" value="BHF-UCL"/>
</dbReference>
<dbReference type="GO" id="GO:0042475">
    <property type="term" value="P:odontogenesis of dentin-containing tooth"/>
    <property type="evidence" value="ECO:0007669"/>
    <property type="project" value="InterPro"/>
</dbReference>
<dbReference type="GO" id="GO:0042127">
    <property type="term" value="P:regulation of cell population proliferation"/>
    <property type="evidence" value="ECO:0000250"/>
    <property type="project" value="BHF-UCL"/>
</dbReference>
<dbReference type="DisProt" id="DP02558"/>
<dbReference type="InterPro" id="IPR007798">
    <property type="entry name" value="Amelin"/>
</dbReference>
<dbReference type="PANTHER" id="PTHR14115">
    <property type="entry name" value="AMELOBLASTIN"/>
    <property type="match status" value="1"/>
</dbReference>
<dbReference type="PANTHER" id="PTHR14115:SF0">
    <property type="entry name" value="AMELOBLASTIN"/>
    <property type="match status" value="1"/>
</dbReference>
<dbReference type="Pfam" id="PF05111">
    <property type="entry name" value="Amelin"/>
    <property type="match status" value="2"/>
</dbReference>
<dbReference type="SMART" id="SM00817">
    <property type="entry name" value="Amelin"/>
    <property type="match status" value="1"/>
</dbReference>
<proteinExistence type="evidence at protein level"/>
<gene>
    <name type="primary">AMBN</name>
</gene>